<protein>
    <recommendedName>
        <fullName evidence="1">Endonuclease MutS2</fullName>
        <ecNumber evidence="1">3.1.-.-</ecNumber>
    </recommendedName>
    <alternativeName>
        <fullName evidence="1">Ribosome-associated protein quality control-upstream factor</fullName>
        <shortName evidence="1">RQC-upstream factor</shortName>
        <shortName evidence="1">RqcU</shortName>
        <ecNumber evidence="1">3.6.4.-</ecNumber>
    </alternativeName>
</protein>
<reference key="1">
    <citation type="journal article" date="2001" name="J. Bacteriol.">
        <title>Genome sequence and comparative analysis of the solvent-producing bacterium Clostridium acetobutylicum.</title>
        <authorList>
            <person name="Noelling J."/>
            <person name="Breton G."/>
            <person name="Omelchenko M.V."/>
            <person name="Makarova K.S."/>
            <person name="Zeng Q."/>
            <person name="Gibson R."/>
            <person name="Lee H.M."/>
            <person name="Dubois J."/>
            <person name="Qiu D."/>
            <person name="Hitti J."/>
            <person name="Wolf Y.I."/>
            <person name="Tatusov R.L."/>
            <person name="Sabathe F."/>
            <person name="Doucette-Stamm L.A."/>
            <person name="Soucaille P."/>
            <person name="Daly M.J."/>
            <person name="Bennett G.N."/>
            <person name="Koonin E.V."/>
            <person name="Smith D.R."/>
        </authorList>
    </citation>
    <scope>NUCLEOTIDE SEQUENCE [LARGE SCALE GENOMIC DNA]</scope>
    <source>
        <strain>ATCC 824 / DSM 792 / JCM 1419 / IAM 19013 / LMG 5710 / NBRC 13948 / NRRL B-527 / VKM B-1787 / 2291 / W</strain>
    </source>
</reference>
<keyword id="KW-0067">ATP-binding</keyword>
<keyword id="KW-0238">DNA-binding</keyword>
<keyword id="KW-0255">Endonuclease</keyword>
<keyword id="KW-0378">Hydrolase</keyword>
<keyword id="KW-0540">Nuclease</keyword>
<keyword id="KW-0547">Nucleotide-binding</keyword>
<keyword id="KW-1185">Reference proteome</keyword>
<keyword id="KW-0694">RNA-binding</keyword>
<keyword id="KW-0699">rRNA-binding</keyword>
<sequence length="788" mass="88271">MNEKSLRVLEYFKIKDGIKKYISTSAAKKLIDELEPYGSLYEVKEHIEETKEAFELLMKKGAPPFEGAYDVTEAVSMAEKGFSLAPGQLLKVGSMLRCARKFKEYISHKEEEESYRIIEDICSGIIPLKNIEDNIFNAIIGEEEISDKASTALYSIRRSLKDKNASIKDKVNAMMRSYSKYLQENLYTIRGERYVIPVKAEYKAQVPGLVHDQSSTGATLFIEPMGLVNLNNEIKELMLKEKAEIERILRELSALIYKSIVAVKNNEKIVTELDFIFAKAKYASSINATAPHVNDKGVIDIVMGRHPLIDPAKVVPLNIYMGREFTSLVITGPNTGGKTVTLKTTGLLEVMAMSGLMIPARENSTISFFKEVYADIGDEQSIEQSLSTFSSHMTNIVRIIDDADEDSLVLFDELGAGTDPTEGAALAISILEALRKRGTKIVATTHYSELKAYALKTENVENASVEFDVETLRPTYRLLIGIPGKSNAFEISKRLGLSDYIIEEARKGISKDTLEFEDLIQNLQTRSVKAEENLRKAEFLKEQAEKFKEKYEEKVSSITETREKALHEGRREAKKIIEEAKSEADKILKDMREMERLGYSSEARQRLQESRQKLKEKLNNAEESLNISERDQGEALKSVKEGEEVFIPSLNMKGIVISTQDSKGEVGIQAGIMKINVKLKDLRKTNNNPISKKEKAVKKREARLNLKSVAQSIDLRGLDSEEAIYKTDIYLDEAYMAGLGSVTVIHGKGTGVLRNAINTMLKKNSHVKSYRLGNFGEGGTGVTVVELK</sequence>
<proteinExistence type="inferred from homology"/>
<dbReference type="EC" id="3.1.-.-" evidence="1"/>
<dbReference type="EC" id="3.6.4.-" evidence="1"/>
<dbReference type="EMBL" id="AE001437">
    <property type="protein sequence ID" value="AAK80296.1"/>
    <property type="molecule type" value="Genomic_DNA"/>
</dbReference>
<dbReference type="PIR" id="E97188">
    <property type="entry name" value="E97188"/>
</dbReference>
<dbReference type="RefSeq" id="NP_348956.1">
    <property type="nucleotide sequence ID" value="NC_003030.1"/>
</dbReference>
<dbReference type="RefSeq" id="WP_010965637.1">
    <property type="nucleotide sequence ID" value="NC_003030.1"/>
</dbReference>
<dbReference type="SMR" id="Q97GM6"/>
<dbReference type="STRING" id="272562.CA_C2340"/>
<dbReference type="KEGG" id="cac:CA_C2340"/>
<dbReference type="PATRIC" id="fig|272562.8.peg.2536"/>
<dbReference type="eggNOG" id="COG1193">
    <property type="taxonomic scope" value="Bacteria"/>
</dbReference>
<dbReference type="HOGENOM" id="CLU_011252_2_1_9"/>
<dbReference type="OrthoDB" id="9808166at2"/>
<dbReference type="Proteomes" id="UP000000814">
    <property type="component" value="Chromosome"/>
</dbReference>
<dbReference type="GO" id="GO:0005524">
    <property type="term" value="F:ATP binding"/>
    <property type="evidence" value="ECO:0007669"/>
    <property type="project" value="UniProtKB-UniRule"/>
</dbReference>
<dbReference type="GO" id="GO:0016887">
    <property type="term" value="F:ATP hydrolysis activity"/>
    <property type="evidence" value="ECO:0007669"/>
    <property type="project" value="InterPro"/>
</dbReference>
<dbReference type="GO" id="GO:0140664">
    <property type="term" value="F:ATP-dependent DNA damage sensor activity"/>
    <property type="evidence" value="ECO:0007669"/>
    <property type="project" value="InterPro"/>
</dbReference>
<dbReference type="GO" id="GO:0004519">
    <property type="term" value="F:endonuclease activity"/>
    <property type="evidence" value="ECO:0007669"/>
    <property type="project" value="UniProtKB-UniRule"/>
</dbReference>
<dbReference type="GO" id="GO:0030983">
    <property type="term" value="F:mismatched DNA binding"/>
    <property type="evidence" value="ECO:0007669"/>
    <property type="project" value="InterPro"/>
</dbReference>
<dbReference type="GO" id="GO:0043023">
    <property type="term" value="F:ribosomal large subunit binding"/>
    <property type="evidence" value="ECO:0007669"/>
    <property type="project" value="UniProtKB-UniRule"/>
</dbReference>
<dbReference type="GO" id="GO:0019843">
    <property type="term" value="F:rRNA binding"/>
    <property type="evidence" value="ECO:0007669"/>
    <property type="project" value="UniProtKB-UniRule"/>
</dbReference>
<dbReference type="GO" id="GO:0006298">
    <property type="term" value="P:mismatch repair"/>
    <property type="evidence" value="ECO:0007669"/>
    <property type="project" value="InterPro"/>
</dbReference>
<dbReference type="GO" id="GO:0045910">
    <property type="term" value="P:negative regulation of DNA recombination"/>
    <property type="evidence" value="ECO:0007669"/>
    <property type="project" value="InterPro"/>
</dbReference>
<dbReference type="GO" id="GO:0072344">
    <property type="term" value="P:rescue of stalled ribosome"/>
    <property type="evidence" value="ECO:0007669"/>
    <property type="project" value="UniProtKB-UniRule"/>
</dbReference>
<dbReference type="CDD" id="cd03280">
    <property type="entry name" value="ABC_MutS2"/>
    <property type="match status" value="1"/>
</dbReference>
<dbReference type="FunFam" id="3.30.1370.110:FF:000007">
    <property type="entry name" value="Endonuclease MutS2"/>
    <property type="match status" value="1"/>
</dbReference>
<dbReference type="FunFam" id="3.40.50.300:FF:000830">
    <property type="entry name" value="Endonuclease MutS2"/>
    <property type="match status" value="1"/>
</dbReference>
<dbReference type="Gene3D" id="3.30.1370.110">
    <property type="match status" value="1"/>
</dbReference>
<dbReference type="Gene3D" id="3.40.50.300">
    <property type="entry name" value="P-loop containing nucleotide triphosphate hydrolases"/>
    <property type="match status" value="1"/>
</dbReference>
<dbReference type="HAMAP" id="MF_00092">
    <property type="entry name" value="MutS2"/>
    <property type="match status" value="1"/>
</dbReference>
<dbReference type="InterPro" id="IPR000432">
    <property type="entry name" value="DNA_mismatch_repair_MutS_C"/>
</dbReference>
<dbReference type="InterPro" id="IPR007696">
    <property type="entry name" value="DNA_mismatch_repair_MutS_core"/>
</dbReference>
<dbReference type="InterPro" id="IPR036187">
    <property type="entry name" value="DNA_mismatch_repair_MutS_sf"/>
</dbReference>
<dbReference type="InterPro" id="IPR046893">
    <property type="entry name" value="MSSS"/>
</dbReference>
<dbReference type="InterPro" id="IPR045076">
    <property type="entry name" value="MutS"/>
</dbReference>
<dbReference type="InterPro" id="IPR005747">
    <property type="entry name" value="MutS2"/>
</dbReference>
<dbReference type="InterPro" id="IPR027417">
    <property type="entry name" value="P-loop_NTPase"/>
</dbReference>
<dbReference type="InterPro" id="IPR002625">
    <property type="entry name" value="Smr_dom"/>
</dbReference>
<dbReference type="InterPro" id="IPR036063">
    <property type="entry name" value="Smr_dom_sf"/>
</dbReference>
<dbReference type="NCBIfam" id="TIGR01069">
    <property type="entry name" value="mutS2"/>
    <property type="match status" value="1"/>
</dbReference>
<dbReference type="PANTHER" id="PTHR48466:SF2">
    <property type="entry name" value="OS10G0509000 PROTEIN"/>
    <property type="match status" value="1"/>
</dbReference>
<dbReference type="PANTHER" id="PTHR48466">
    <property type="entry name" value="OS10G0509000 PROTEIN-RELATED"/>
    <property type="match status" value="1"/>
</dbReference>
<dbReference type="Pfam" id="PF20297">
    <property type="entry name" value="MSSS"/>
    <property type="match status" value="1"/>
</dbReference>
<dbReference type="Pfam" id="PF00488">
    <property type="entry name" value="MutS_V"/>
    <property type="match status" value="1"/>
</dbReference>
<dbReference type="Pfam" id="PF01713">
    <property type="entry name" value="Smr"/>
    <property type="match status" value="1"/>
</dbReference>
<dbReference type="PIRSF" id="PIRSF005814">
    <property type="entry name" value="MutS_YshD"/>
    <property type="match status" value="1"/>
</dbReference>
<dbReference type="SMART" id="SM00534">
    <property type="entry name" value="MUTSac"/>
    <property type="match status" value="1"/>
</dbReference>
<dbReference type="SMART" id="SM00533">
    <property type="entry name" value="MUTSd"/>
    <property type="match status" value="1"/>
</dbReference>
<dbReference type="SMART" id="SM00463">
    <property type="entry name" value="SMR"/>
    <property type="match status" value="1"/>
</dbReference>
<dbReference type="SUPFAM" id="SSF48334">
    <property type="entry name" value="DNA repair protein MutS, domain III"/>
    <property type="match status" value="1"/>
</dbReference>
<dbReference type="SUPFAM" id="SSF52540">
    <property type="entry name" value="P-loop containing nucleoside triphosphate hydrolases"/>
    <property type="match status" value="1"/>
</dbReference>
<dbReference type="SUPFAM" id="SSF160443">
    <property type="entry name" value="SMR domain-like"/>
    <property type="match status" value="1"/>
</dbReference>
<dbReference type="PROSITE" id="PS00486">
    <property type="entry name" value="DNA_MISMATCH_REPAIR_2"/>
    <property type="match status" value="1"/>
</dbReference>
<dbReference type="PROSITE" id="PS50828">
    <property type="entry name" value="SMR"/>
    <property type="match status" value="1"/>
</dbReference>
<evidence type="ECO:0000255" key="1">
    <source>
        <dbReference type="HAMAP-Rule" id="MF_00092"/>
    </source>
</evidence>
<organism>
    <name type="scientific">Clostridium acetobutylicum (strain ATCC 824 / DSM 792 / JCM 1419 / IAM 19013 / LMG 5710 / NBRC 13948 / NRRL B-527 / VKM B-1787 / 2291 / W)</name>
    <dbReference type="NCBI Taxonomy" id="272562"/>
    <lineage>
        <taxon>Bacteria</taxon>
        <taxon>Bacillati</taxon>
        <taxon>Bacillota</taxon>
        <taxon>Clostridia</taxon>
        <taxon>Eubacteriales</taxon>
        <taxon>Clostridiaceae</taxon>
        <taxon>Clostridium</taxon>
    </lineage>
</organism>
<gene>
    <name evidence="1" type="primary">mutS2</name>
    <name evidence="1" type="synonym">rqcU</name>
    <name type="ordered locus">CA_C2340</name>
</gene>
<feature type="chain" id="PRO_0000115219" description="Endonuclease MutS2">
    <location>
        <begin position="1"/>
        <end position="788"/>
    </location>
</feature>
<feature type="domain" description="Smr" evidence="1">
    <location>
        <begin position="713"/>
        <end position="788"/>
    </location>
</feature>
<feature type="binding site" evidence="1">
    <location>
        <begin position="332"/>
        <end position="339"/>
    </location>
    <ligand>
        <name>ATP</name>
        <dbReference type="ChEBI" id="CHEBI:30616"/>
    </ligand>
</feature>
<name>MUTS2_CLOAB</name>
<accession>Q97GM6</accession>
<comment type="function">
    <text evidence="1">Endonuclease that is involved in the suppression of homologous recombination and thus may have a key role in the control of bacterial genetic diversity.</text>
</comment>
<comment type="function">
    <text evidence="1">Acts as a ribosome collision sensor, splitting the ribosome into its 2 subunits. Detects stalled/collided 70S ribosomes which it binds and splits by an ATP-hydrolysis driven conformational change. Acts upstream of the ribosome quality control system (RQC), a ribosome-associated complex that mediates the extraction of incompletely synthesized nascent chains from stalled ribosomes and their subsequent degradation. Probably generates substrates for RQC.</text>
</comment>
<comment type="subunit">
    <text evidence="1">Homodimer. Binds to stalled ribosomes, contacting rRNA.</text>
</comment>
<comment type="similarity">
    <text evidence="1">Belongs to the DNA mismatch repair MutS family. MutS2 subfamily.</text>
</comment>